<gene>
    <name evidence="1" type="primary">rsgA</name>
    <name type="ordered locus">KPN78578_44880</name>
    <name type="ORF">KPN_04558</name>
</gene>
<sequence>MSKNKLSKGQQRRVKANHQRRLKTTAEKADYDDNLFGETSEGIVISRFGMHADVESADGSVHRCNIRRTIRSLVTGDRVVWRPGKDAADGVSVKGIVEAVHDRASVLTRPDFYDGVKPIAANIDQIVVVSAILPELSLNIIDRYLVACEAQDIEPLIVLNKIDLLDDDGLRFVNEQMDIYRNIGYRVLLVSSRTQDGLKPLEAALTDRISIFAGQSGVGKSSLLNALLGLSEDQILTNDVSDVSGLGQHTTTAARLYHFPHGGDVIDSPGVREFGLWHLEAEQITNGFVEFHDYLGRCKYRDCKHDTDPGCALREAVENGKIAESRFENYHRILESMAQVQVKTRKNFSSSDD</sequence>
<name>RSGA_KLEP7</name>
<comment type="function">
    <text evidence="1">One of several proteins that assist in the late maturation steps of the functional core of the 30S ribosomal subunit. Helps release RbfA from mature subunits. May play a role in the assembly of ribosomal proteins into the subunit. Circularly permuted GTPase that catalyzes slow GTP hydrolysis, GTPase activity is stimulated by the 30S ribosomal subunit.</text>
</comment>
<comment type="cofactor">
    <cofactor evidence="1">
        <name>Zn(2+)</name>
        <dbReference type="ChEBI" id="CHEBI:29105"/>
    </cofactor>
    <text evidence="1">Binds 1 zinc ion per subunit.</text>
</comment>
<comment type="subunit">
    <text evidence="1">Monomer. Associates with 30S ribosomal subunit, binds 16S rRNA.</text>
</comment>
<comment type="subcellular location">
    <subcellularLocation>
        <location evidence="1">Cytoplasm</location>
    </subcellularLocation>
</comment>
<comment type="similarity">
    <text evidence="1">Belongs to the TRAFAC class YlqF/YawG GTPase family. RsgA subfamily.</text>
</comment>
<evidence type="ECO:0000255" key="1">
    <source>
        <dbReference type="HAMAP-Rule" id="MF_01820"/>
    </source>
</evidence>
<evidence type="ECO:0000255" key="2">
    <source>
        <dbReference type="PROSITE-ProRule" id="PRU01058"/>
    </source>
</evidence>
<evidence type="ECO:0000256" key="3">
    <source>
        <dbReference type="SAM" id="MobiDB-lite"/>
    </source>
</evidence>
<feature type="chain" id="PRO_1000188089" description="Small ribosomal subunit biogenesis GTPase RsgA">
    <location>
        <begin position="1"/>
        <end position="353"/>
    </location>
</feature>
<feature type="domain" description="CP-type G" evidence="2">
    <location>
        <begin position="104"/>
        <end position="274"/>
    </location>
</feature>
<feature type="region of interest" description="Disordered" evidence="3">
    <location>
        <begin position="1"/>
        <end position="24"/>
    </location>
</feature>
<feature type="compositionally biased region" description="Basic residues" evidence="3">
    <location>
        <begin position="10"/>
        <end position="23"/>
    </location>
</feature>
<feature type="binding site" evidence="1">
    <location>
        <begin position="160"/>
        <end position="163"/>
    </location>
    <ligand>
        <name>GTP</name>
        <dbReference type="ChEBI" id="CHEBI:37565"/>
    </ligand>
</feature>
<feature type="binding site" evidence="1">
    <location>
        <begin position="214"/>
        <end position="222"/>
    </location>
    <ligand>
        <name>GTP</name>
        <dbReference type="ChEBI" id="CHEBI:37565"/>
    </ligand>
</feature>
<feature type="binding site" evidence="1">
    <location>
        <position position="298"/>
    </location>
    <ligand>
        <name>Zn(2+)</name>
        <dbReference type="ChEBI" id="CHEBI:29105"/>
    </ligand>
</feature>
<feature type="binding site" evidence="1">
    <location>
        <position position="303"/>
    </location>
    <ligand>
        <name>Zn(2+)</name>
        <dbReference type="ChEBI" id="CHEBI:29105"/>
    </ligand>
</feature>
<feature type="binding site" evidence="1">
    <location>
        <position position="305"/>
    </location>
    <ligand>
        <name>Zn(2+)</name>
        <dbReference type="ChEBI" id="CHEBI:29105"/>
    </ligand>
</feature>
<feature type="binding site" evidence="1">
    <location>
        <position position="311"/>
    </location>
    <ligand>
        <name>Zn(2+)</name>
        <dbReference type="ChEBI" id="CHEBI:29105"/>
    </ligand>
</feature>
<keyword id="KW-0963">Cytoplasm</keyword>
<keyword id="KW-0342">GTP-binding</keyword>
<keyword id="KW-0378">Hydrolase</keyword>
<keyword id="KW-0479">Metal-binding</keyword>
<keyword id="KW-0547">Nucleotide-binding</keyword>
<keyword id="KW-0690">Ribosome biogenesis</keyword>
<keyword id="KW-0694">RNA-binding</keyword>
<keyword id="KW-0699">rRNA-binding</keyword>
<keyword id="KW-0862">Zinc</keyword>
<proteinExistence type="inferred from homology"/>
<protein>
    <recommendedName>
        <fullName evidence="1">Small ribosomal subunit biogenesis GTPase RsgA</fullName>
        <ecNumber evidence="1">3.6.1.-</ecNumber>
    </recommendedName>
</protein>
<accession>A6TH78</accession>
<organism>
    <name type="scientific">Klebsiella pneumoniae subsp. pneumoniae (strain ATCC 700721 / MGH 78578)</name>
    <dbReference type="NCBI Taxonomy" id="272620"/>
    <lineage>
        <taxon>Bacteria</taxon>
        <taxon>Pseudomonadati</taxon>
        <taxon>Pseudomonadota</taxon>
        <taxon>Gammaproteobacteria</taxon>
        <taxon>Enterobacterales</taxon>
        <taxon>Enterobacteriaceae</taxon>
        <taxon>Klebsiella/Raoultella group</taxon>
        <taxon>Klebsiella</taxon>
        <taxon>Klebsiella pneumoniae complex</taxon>
    </lineage>
</organism>
<reference key="1">
    <citation type="submission" date="2006-09" db="EMBL/GenBank/DDBJ databases">
        <authorList>
            <consortium name="The Klebsiella pneumonia Genome Sequencing Project"/>
            <person name="McClelland M."/>
            <person name="Sanderson E.K."/>
            <person name="Spieth J."/>
            <person name="Clifton W.S."/>
            <person name="Latreille P."/>
            <person name="Sabo A."/>
            <person name="Pepin K."/>
            <person name="Bhonagiri V."/>
            <person name="Porwollik S."/>
            <person name="Ali J."/>
            <person name="Wilson R.K."/>
        </authorList>
    </citation>
    <scope>NUCLEOTIDE SEQUENCE [LARGE SCALE GENOMIC DNA]</scope>
    <source>
        <strain>ATCC 700721 / MGH 78578</strain>
    </source>
</reference>
<dbReference type="EC" id="3.6.1.-" evidence="1"/>
<dbReference type="EMBL" id="CP000647">
    <property type="protein sequence ID" value="ABR79912.1"/>
    <property type="molecule type" value="Genomic_DNA"/>
</dbReference>
<dbReference type="RefSeq" id="WP_002885537.1">
    <property type="nucleotide sequence ID" value="NC_009648.1"/>
</dbReference>
<dbReference type="SMR" id="A6TH78"/>
<dbReference type="STRING" id="272620.KPN_04558"/>
<dbReference type="PaxDb" id="272620-KPN_04558"/>
<dbReference type="EnsemblBacteria" id="ABR79912">
    <property type="protein sequence ID" value="ABR79912"/>
    <property type="gene ID" value="KPN_04558"/>
</dbReference>
<dbReference type="KEGG" id="kpn:KPN_04558"/>
<dbReference type="HOGENOM" id="CLU_033617_2_0_6"/>
<dbReference type="Proteomes" id="UP000000265">
    <property type="component" value="Chromosome"/>
</dbReference>
<dbReference type="GO" id="GO:0005737">
    <property type="term" value="C:cytoplasm"/>
    <property type="evidence" value="ECO:0007669"/>
    <property type="project" value="UniProtKB-SubCell"/>
</dbReference>
<dbReference type="GO" id="GO:0005525">
    <property type="term" value="F:GTP binding"/>
    <property type="evidence" value="ECO:0007669"/>
    <property type="project" value="UniProtKB-UniRule"/>
</dbReference>
<dbReference type="GO" id="GO:0003924">
    <property type="term" value="F:GTPase activity"/>
    <property type="evidence" value="ECO:0007669"/>
    <property type="project" value="UniProtKB-UniRule"/>
</dbReference>
<dbReference type="GO" id="GO:0046872">
    <property type="term" value="F:metal ion binding"/>
    <property type="evidence" value="ECO:0007669"/>
    <property type="project" value="UniProtKB-KW"/>
</dbReference>
<dbReference type="GO" id="GO:0019843">
    <property type="term" value="F:rRNA binding"/>
    <property type="evidence" value="ECO:0007669"/>
    <property type="project" value="UniProtKB-KW"/>
</dbReference>
<dbReference type="GO" id="GO:0042274">
    <property type="term" value="P:ribosomal small subunit biogenesis"/>
    <property type="evidence" value="ECO:0007669"/>
    <property type="project" value="UniProtKB-UniRule"/>
</dbReference>
<dbReference type="CDD" id="cd01854">
    <property type="entry name" value="YjeQ_EngC"/>
    <property type="match status" value="1"/>
</dbReference>
<dbReference type="FunFam" id="3.40.50.300:FF:000389">
    <property type="entry name" value="Small ribosomal subunit biogenesis GTPase RsgA"/>
    <property type="match status" value="1"/>
</dbReference>
<dbReference type="Gene3D" id="2.40.50.140">
    <property type="entry name" value="Nucleic acid-binding proteins"/>
    <property type="match status" value="1"/>
</dbReference>
<dbReference type="Gene3D" id="3.40.50.300">
    <property type="entry name" value="P-loop containing nucleotide triphosphate hydrolases"/>
    <property type="match status" value="1"/>
</dbReference>
<dbReference type="Gene3D" id="1.10.40.50">
    <property type="entry name" value="Probable gtpase engc, domain 3"/>
    <property type="match status" value="1"/>
</dbReference>
<dbReference type="HAMAP" id="MF_01820">
    <property type="entry name" value="GTPase_RsgA"/>
    <property type="match status" value="1"/>
</dbReference>
<dbReference type="InterPro" id="IPR030378">
    <property type="entry name" value="G_CP_dom"/>
</dbReference>
<dbReference type="InterPro" id="IPR012340">
    <property type="entry name" value="NA-bd_OB-fold"/>
</dbReference>
<dbReference type="InterPro" id="IPR027417">
    <property type="entry name" value="P-loop_NTPase"/>
</dbReference>
<dbReference type="InterPro" id="IPR004881">
    <property type="entry name" value="Ribosome_biogen_GTPase_RsgA"/>
</dbReference>
<dbReference type="InterPro" id="IPR010914">
    <property type="entry name" value="RsgA_GTPase_dom"/>
</dbReference>
<dbReference type="NCBIfam" id="NF008931">
    <property type="entry name" value="PRK12288.1"/>
    <property type="match status" value="1"/>
</dbReference>
<dbReference type="NCBIfam" id="TIGR00157">
    <property type="entry name" value="ribosome small subunit-dependent GTPase A"/>
    <property type="match status" value="1"/>
</dbReference>
<dbReference type="PANTHER" id="PTHR32120">
    <property type="entry name" value="SMALL RIBOSOMAL SUBUNIT BIOGENESIS GTPASE RSGA"/>
    <property type="match status" value="1"/>
</dbReference>
<dbReference type="PANTHER" id="PTHR32120:SF11">
    <property type="entry name" value="SMALL RIBOSOMAL SUBUNIT BIOGENESIS GTPASE RSGA 1, MITOCHONDRIAL-RELATED"/>
    <property type="match status" value="1"/>
</dbReference>
<dbReference type="Pfam" id="PF03193">
    <property type="entry name" value="RsgA_GTPase"/>
    <property type="match status" value="1"/>
</dbReference>
<dbReference type="SUPFAM" id="SSF52540">
    <property type="entry name" value="P-loop containing nucleoside triphosphate hydrolases"/>
    <property type="match status" value="1"/>
</dbReference>
<dbReference type="PROSITE" id="PS50936">
    <property type="entry name" value="ENGC_GTPASE"/>
    <property type="match status" value="1"/>
</dbReference>
<dbReference type="PROSITE" id="PS51721">
    <property type="entry name" value="G_CP"/>
    <property type="match status" value="1"/>
</dbReference>